<accession>Q757C7</accession>
<organism>
    <name type="scientific">Eremothecium gossypii (strain ATCC 10895 / CBS 109.51 / FGSC 9923 / NRRL Y-1056)</name>
    <name type="common">Yeast</name>
    <name type="synonym">Ashbya gossypii</name>
    <dbReference type="NCBI Taxonomy" id="284811"/>
    <lineage>
        <taxon>Eukaryota</taxon>
        <taxon>Fungi</taxon>
        <taxon>Dikarya</taxon>
        <taxon>Ascomycota</taxon>
        <taxon>Saccharomycotina</taxon>
        <taxon>Saccharomycetes</taxon>
        <taxon>Saccharomycetales</taxon>
        <taxon>Saccharomycetaceae</taxon>
        <taxon>Eremothecium</taxon>
    </lineage>
</organism>
<name>LOT5_EREGS</name>
<evidence type="ECO:0000250" key="1"/>
<evidence type="ECO:0000305" key="2"/>
<dbReference type="EMBL" id="AE016818">
    <property type="protein sequence ID" value="AAS52770.2"/>
    <property type="molecule type" value="Genomic_DNA"/>
</dbReference>
<dbReference type="RefSeq" id="NP_984946.2">
    <property type="nucleotide sequence ID" value="NM_210300.2"/>
</dbReference>
<dbReference type="FunCoup" id="Q757C7">
    <property type="interactions" value="47"/>
</dbReference>
<dbReference type="STRING" id="284811.Q757C7"/>
<dbReference type="EnsemblFungi" id="AAS52770">
    <property type="protein sequence ID" value="AAS52770"/>
    <property type="gene ID" value="AGOS_AER086C"/>
</dbReference>
<dbReference type="GeneID" id="4621150"/>
<dbReference type="KEGG" id="ago:AGOS_AER086C"/>
<dbReference type="eggNOG" id="ENOG502RY1I">
    <property type="taxonomic scope" value="Eukaryota"/>
</dbReference>
<dbReference type="HOGENOM" id="CLU_073622_0_0_1"/>
<dbReference type="InParanoid" id="Q757C7"/>
<dbReference type="OMA" id="NSCIIIW"/>
<dbReference type="OrthoDB" id="19714at2759"/>
<dbReference type="Proteomes" id="UP000000591">
    <property type="component" value="Chromosome V"/>
</dbReference>
<dbReference type="GO" id="GO:0005829">
    <property type="term" value="C:cytosol"/>
    <property type="evidence" value="ECO:0000318"/>
    <property type="project" value="GO_Central"/>
</dbReference>
<dbReference type="GO" id="GO:0034715">
    <property type="term" value="C:pICln-Sm protein complex"/>
    <property type="evidence" value="ECO:0000318"/>
    <property type="project" value="GO_Central"/>
</dbReference>
<dbReference type="GO" id="GO:0005681">
    <property type="term" value="C:spliceosomal complex"/>
    <property type="evidence" value="ECO:0000318"/>
    <property type="project" value="GO_Central"/>
</dbReference>
<dbReference type="GO" id="GO:0045292">
    <property type="term" value="P:mRNA cis splicing, via spliceosome"/>
    <property type="evidence" value="ECO:0000318"/>
    <property type="project" value="GO_Central"/>
</dbReference>
<dbReference type="GO" id="GO:0000387">
    <property type="term" value="P:spliceosomal snRNP assembly"/>
    <property type="evidence" value="ECO:0000318"/>
    <property type="project" value="GO_Central"/>
</dbReference>
<dbReference type="InterPro" id="IPR039924">
    <property type="entry name" value="ICln/Lot5/Saf5"/>
</dbReference>
<dbReference type="Pfam" id="PF03517">
    <property type="entry name" value="Voldacs"/>
    <property type="match status" value="1"/>
</dbReference>
<protein>
    <recommendedName>
        <fullName>Protein LOT5</fullName>
    </recommendedName>
</protein>
<gene>
    <name type="primary">LOT5</name>
    <name type="ordered locus">AER086C</name>
</gene>
<comment type="subcellular location">
    <subcellularLocation>
        <location evidence="1">Cytoplasm</location>
    </subcellularLocation>
    <subcellularLocation>
        <location evidence="1">Nucleus</location>
    </subcellularLocation>
</comment>
<comment type="similarity">
    <text evidence="2">Belongs to the LOT5 family.</text>
</comment>
<keyword id="KW-0963">Cytoplasm</keyword>
<keyword id="KW-0539">Nucleus</keyword>
<keyword id="KW-1185">Reference proteome</keyword>
<reference key="1">
    <citation type="journal article" date="2004" name="Science">
        <title>The Ashbya gossypii genome as a tool for mapping the ancient Saccharomyces cerevisiae genome.</title>
        <authorList>
            <person name="Dietrich F.S."/>
            <person name="Voegeli S."/>
            <person name="Brachat S."/>
            <person name="Lerch A."/>
            <person name="Gates K."/>
            <person name="Steiner S."/>
            <person name="Mohr C."/>
            <person name="Poehlmann R."/>
            <person name="Luedi P."/>
            <person name="Choi S."/>
            <person name="Wing R.A."/>
            <person name="Flavier A."/>
            <person name="Gaffney T.D."/>
            <person name="Philippsen P."/>
        </authorList>
    </citation>
    <scope>NUCLEOTIDE SEQUENCE [LARGE SCALE GENOMIC DNA]</scope>
    <source>
        <strain>ATCC 10895 / CBS 109.51 / FGSC 9923 / NRRL Y-1056</strain>
    </source>
</reference>
<reference key="2">
    <citation type="journal article" date="2013" name="G3 (Bethesda)">
        <title>Genomes of Ashbya fungi isolated from insects reveal four mating-type loci, numerous translocations, lack of transposons, and distinct gene duplications.</title>
        <authorList>
            <person name="Dietrich F.S."/>
            <person name="Voegeli S."/>
            <person name="Kuo S."/>
            <person name="Philippsen P."/>
        </authorList>
    </citation>
    <scope>GENOME REANNOTATION</scope>
    <scope>SEQUENCE REVISION TO 180</scope>
    <source>
        <strain>ATCC 10895 / CBS 109.51 / FGSC 9923 / NRRL Y-1056</strain>
    </source>
</reference>
<feature type="chain" id="PRO_0000324395" description="Protein LOT5">
    <location>
        <begin position="1"/>
        <end position="269"/>
    </location>
</feature>
<proteinExistence type="inferred from homology"/>
<sequence>MNADRPCCQFVTTKPTVENVTPFAQFQLTQPRLKGVSLQQLSALPILYGGGRNFLFGRFTDSEPQLQDTDLFVLDSCILLWPAHALRGLRIPYDAVIYHAVRRADVLELVLAVERDATLDSLFPPAPGPQPFALSTLELRLRPRYATYDRHYSGAVEQLFTFRDFGLNRGDAMVANCNTAIATCMEFHHRAAAADDDDDDDDGPAAHVTPLAELLAPAGHVPIYANHGSADDLTDDGLTDDGPQGGAAAGMALAFCSAARVPTKRRRQD</sequence>